<comment type="function">
    <text evidence="1">Part of the small subunit (SSU) processome, first precursor of the small eukaryotic ribosomal subunit. During the assembly of the SSU processome in the nucleolus, many ribosome biogenesis factors, an RNA chaperone and ribosomal proteins associate with the nascent pre-rRNA and work in concert to generate RNA folding, modifications, rearrangements and cleavage as well as targeted degradation of pre-ribosomal RNA by the RNA exosome. Positively regulates dimethylation of two adjacent adenosines in the loop of a conserved hairpin near the 3'-end of 18S rRNA.</text>
</comment>
<comment type="subunit">
    <text evidence="1">Part of the small subunit (SSU) processome, composed of more than 70 proteins and the RNA chaperone small nucleolar RNA (snoRNA) U3.</text>
</comment>
<comment type="subcellular location">
    <subcellularLocation>
        <location evidence="1">Nucleus</location>
        <location evidence="1">Nucleolus</location>
    </subcellularLocation>
</comment>
<comment type="similarity">
    <text evidence="3">Belongs to the PNO1 family.</text>
</comment>
<comment type="sequence caution" evidence="3">
    <conflict type="erroneous initiation">
        <sequence resource="EMBL-CDS" id="AAH65596"/>
    </conflict>
    <text>Truncated N-terminus.</text>
</comment>
<evidence type="ECO:0000250" key="1">
    <source>
        <dbReference type="UniProtKB" id="Q9NRX1"/>
    </source>
</evidence>
<evidence type="ECO:0000256" key="2">
    <source>
        <dbReference type="SAM" id="MobiDB-lite"/>
    </source>
</evidence>
<evidence type="ECO:0000305" key="3"/>
<protein>
    <recommendedName>
        <fullName>RNA-binding protein PNO1</fullName>
    </recommendedName>
</protein>
<gene>
    <name type="primary">pno1</name>
    <name type="ORF">zgc:65782</name>
</gene>
<keyword id="KW-0539">Nucleus</keyword>
<keyword id="KW-1185">Reference proteome</keyword>
<keyword id="KW-0694">RNA-binding</keyword>
<proteinExistence type="evidence at transcript level"/>
<sequence>MESVSDSTAEVSATMDCDGNTEAFEKVKSKKREKCKRAAAEMDTQTEESSSSAPVKRPHFPALSGDQLGGGVDEMRKVPVPSHRYTPLKENWLKIFTPIVENLQLQVRFNLKTRQVEIKTCKETQDIGALTRAADFVKAFVLGFQVEDALALIRLDELFLETFDVTDVKPLKGDHLSRAIGRIAGKGGKTKFTIENVTKTRIVLADTKIHILGSFQNIKMARTAICNLILGSPPSKVYGNLRAVATRSAERF</sequence>
<accession>Q6VEU3</accession>
<accession>Q6P0J4</accession>
<accession>Q6PHK2</accession>
<name>PNO1_DANRE</name>
<reference key="1">
    <citation type="journal article" date="2004" name="DNA Seq.">
        <title>Cloning and characterization of a novel human RNA binding protein gene PNO1.</title>
        <authorList>
            <person name="Zhou G.-J."/>
            <person name="Zhang Y."/>
            <person name="Wang J."/>
            <person name="Guo J.H."/>
            <person name="Ni J."/>
            <person name="Zhong Z.-M."/>
            <person name="Wang L.-Q."/>
            <person name="Dang Y.-J."/>
            <person name="Dai J.F."/>
            <person name="Yu L."/>
        </authorList>
    </citation>
    <scope>NUCLEOTIDE SEQUENCE [MRNA]</scope>
</reference>
<reference key="2">
    <citation type="submission" date="2004-01" db="EMBL/GenBank/DDBJ databases">
        <authorList>
            <consortium name="NIH - Zebrafish Gene Collection (ZGC) project"/>
        </authorList>
    </citation>
    <scope>NUCLEOTIDE SEQUENCE [LARGE SCALE MRNA]</scope>
    <source>
        <tissue>Embryo</tissue>
    </source>
</reference>
<dbReference type="EMBL" id="AY341884">
    <property type="protein sequence ID" value="AAQ24168.1"/>
    <property type="molecule type" value="mRNA"/>
</dbReference>
<dbReference type="EMBL" id="BC056522">
    <property type="protein sequence ID" value="AAH56522.1"/>
    <property type="molecule type" value="mRNA"/>
</dbReference>
<dbReference type="EMBL" id="BC065596">
    <property type="protein sequence ID" value="AAH65596.1"/>
    <property type="status" value="ALT_INIT"/>
    <property type="molecule type" value="mRNA"/>
</dbReference>
<dbReference type="RefSeq" id="NP_956842.2">
    <property type="nucleotide sequence ID" value="NM_200548.1"/>
</dbReference>
<dbReference type="SMR" id="Q6VEU3"/>
<dbReference type="FunCoup" id="Q6VEU3">
    <property type="interactions" value="1899"/>
</dbReference>
<dbReference type="STRING" id="7955.ENSDARP00000004926"/>
<dbReference type="PaxDb" id="7955-ENSDARP00000004926"/>
<dbReference type="GeneID" id="393520"/>
<dbReference type="KEGG" id="dre:393520"/>
<dbReference type="AGR" id="ZFIN:ZDB-GENE-040426-1419"/>
<dbReference type="CTD" id="56902"/>
<dbReference type="ZFIN" id="ZDB-GENE-040426-1419">
    <property type="gene designation" value="pno1"/>
</dbReference>
<dbReference type="eggNOG" id="KOG3273">
    <property type="taxonomic scope" value="Eukaryota"/>
</dbReference>
<dbReference type="InParanoid" id="Q6VEU3"/>
<dbReference type="OrthoDB" id="1932641at2759"/>
<dbReference type="PhylomeDB" id="Q6VEU3"/>
<dbReference type="PRO" id="PR:Q6VEU3"/>
<dbReference type="Proteomes" id="UP000000437">
    <property type="component" value="Chromosome 13"/>
</dbReference>
<dbReference type="GO" id="GO:0005730">
    <property type="term" value="C:nucleolus"/>
    <property type="evidence" value="ECO:0000250"/>
    <property type="project" value="UniProtKB"/>
</dbReference>
<dbReference type="GO" id="GO:0005634">
    <property type="term" value="C:nucleus"/>
    <property type="evidence" value="ECO:0000318"/>
    <property type="project" value="GO_Central"/>
</dbReference>
<dbReference type="GO" id="GO:0032040">
    <property type="term" value="C:small-subunit processome"/>
    <property type="evidence" value="ECO:0000250"/>
    <property type="project" value="UniProtKB"/>
</dbReference>
<dbReference type="GO" id="GO:0003723">
    <property type="term" value="F:RNA binding"/>
    <property type="evidence" value="ECO:0007669"/>
    <property type="project" value="UniProtKB-KW"/>
</dbReference>
<dbReference type="GO" id="GO:0042274">
    <property type="term" value="P:ribosomal small subunit biogenesis"/>
    <property type="evidence" value="ECO:0000250"/>
    <property type="project" value="UniProtKB"/>
</dbReference>
<dbReference type="CDD" id="cd22391">
    <property type="entry name" value="KH-I_PNO1_rpt1"/>
    <property type="match status" value="1"/>
</dbReference>
<dbReference type="CDD" id="cd22392">
    <property type="entry name" value="KH-I_PNO1_rpt2"/>
    <property type="match status" value="1"/>
</dbReference>
<dbReference type="FunFam" id="3.30.1370.10:FF:000009">
    <property type="entry name" value="RNA-binding protein PNO1"/>
    <property type="match status" value="1"/>
</dbReference>
<dbReference type="FunFam" id="3.30.1370.10:FF:000048">
    <property type="entry name" value="RNA-binding protein PNO1 isoform X2"/>
    <property type="match status" value="1"/>
</dbReference>
<dbReference type="Gene3D" id="3.30.1370.10">
    <property type="entry name" value="K Homology domain, type 1"/>
    <property type="match status" value="2"/>
</dbReference>
<dbReference type="InterPro" id="IPR055212">
    <property type="entry name" value="KH-I_PNO1_first"/>
</dbReference>
<dbReference type="InterPro" id="IPR004087">
    <property type="entry name" value="KH_dom"/>
</dbReference>
<dbReference type="InterPro" id="IPR036612">
    <property type="entry name" value="KH_dom_type_1_sf"/>
</dbReference>
<dbReference type="InterPro" id="IPR055211">
    <property type="entry name" value="KH_PNO1_2nd"/>
</dbReference>
<dbReference type="PANTHER" id="PTHR12826">
    <property type="entry name" value="RIBONUCLEASE Y"/>
    <property type="match status" value="1"/>
</dbReference>
<dbReference type="PANTHER" id="PTHR12826:SF13">
    <property type="entry name" value="RNA-BINDING PROTEIN PNO1"/>
    <property type="match status" value="1"/>
</dbReference>
<dbReference type="Pfam" id="PF22891">
    <property type="entry name" value="KH_PNO1_2nd"/>
    <property type="match status" value="1"/>
</dbReference>
<dbReference type="SMART" id="SM00322">
    <property type="entry name" value="KH"/>
    <property type="match status" value="1"/>
</dbReference>
<dbReference type="SUPFAM" id="SSF54791">
    <property type="entry name" value="Eukaryotic type KH-domain (KH-domain type I)"/>
    <property type="match status" value="1"/>
</dbReference>
<organism>
    <name type="scientific">Danio rerio</name>
    <name type="common">Zebrafish</name>
    <name type="synonym">Brachydanio rerio</name>
    <dbReference type="NCBI Taxonomy" id="7955"/>
    <lineage>
        <taxon>Eukaryota</taxon>
        <taxon>Metazoa</taxon>
        <taxon>Chordata</taxon>
        <taxon>Craniata</taxon>
        <taxon>Vertebrata</taxon>
        <taxon>Euteleostomi</taxon>
        <taxon>Actinopterygii</taxon>
        <taxon>Neopterygii</taxon>
        <taxon>Teleostei</taxon>
        <taxon>Ostariophysi</taxon>
        <taxon>Cypriniformes</taxon>
        <taxon>Danionidae</taxon>
        <taxon>Danioninae</taxon>
        <taxon>Danio</taxon>
    </lineage>
</organism>
<feature type="chain" id="PRO_0000270544" description="RNA-binding protein PNO1">
    <location>
        <begin position="1"/>
        <end position="252"/>
    </location>
</feature>
<feature type="domain" description="KH">
    <location>
        <begin position="168"/>
        <end position="225"/>
    </location>
</feature>
<feature type="region of interest" description="Disordered" evidence="2">
    <location>
        <begin position="1"/>
        <end position="72"/>
    </location>
</feature>
<feature type="compositionally biased region" description="Polar residues" evidence="2">
    <location>
        <begin position="1"/>
        <end position="11"/>
    </location>
</feature>
<feature type="compositionally biased region" description="Basic residues" evidence="2">
    <location>
        <begin position="28"/>
        <end position="37"/>
    </location>
</feature>
<feature type="sequence conflict" description="In Ref. 1; AAQ24168." evidence="3" ref="1">
    <original>K</original>
    <variation>R</variation>
    <location>
        <position position="31"/>
    </location>
</feature>
<feature type="sequence conflict" description="In Ref. 1; AAQ24168 and 2; AAH56522." evidence="3" ref="1 2">
    <original>C</original>
    <variation>R</variation>
    <location>
        <position position="35"/>
    </location>
</feature>
<feature type="sequence conflict" description="In Ref. 1; AAQ24168." evidence="3" ref="1">
    <original>RAVA</original>
    <variation>PGVG</variation>
    <location>
        <begin position="242"/>
        <end position="245"/>
    </location>
</feature>